<sequence length="2702" mass="302366">MAKDDNNLSSLVHELRERVAASASTPANNLRHSSGDEDALEIRFRAVIPNLLNTYVVPSLGNGREVTAVLKLVGHTARNIPGVFYHGTPSAILPVIARIIPFFAEPEFVPGHGVLLETVGSLLMLLRSNSRKAYRIFFHDALQAIQDMQPIASLHSIEPEVCESHIPFRCFCMSFSGIGGDLPDANKPRDGDGLVLNLLGANRWQPFATCILKLICKCLTEGTLYVQGLIHTSFFKAACSLVCCGGADVQMACFEFATLVGSILTFNILPHVALIQSIILLLSADEGLPVYRNTIYDSTIGRFLTAVYSSCSDAAVKLTAESLVLVLSHALQRTKSEELKASLCSAYVRIVKSCPPCIWKIHCLLELLHLPEPCFQLIECFKAVLIVLGPGCVRVETTKCGSHTSATSDRPVQGINAGKKRHIEDESTYKRKRQKVGDDIRRGVYFAPEFADETDGKDAASLREMLISTVESLKPPPAGPSLSQTESSIVALSMLTNAFCFCPWTDMTHRLFNQMYAWIPWIAGQVEETNPIMFDISIYLEGIHNLLLVGVDPQYEYTSKGNDLVAIQFLLKLPWTHYMLFKTPSSLVKSKCLSVGIWTKLGLQDGSDFDIFSWSLSDDFEQVQAVAAISMPLKVLFSGLGALLHMFPKLEHLLEEKELMIKKAIPQSLGFLSCLYGSSTTDSEKTACHLLLHEDLKKDETLNSLLQGFRCSKCDKFIEREDEKHFRIIETPEMVKLKMDHHRDYFNLQSLYFNLLYDESSEETQLACVEVIRRILGHTSPDILVRTRSQWIRCLQYLLVHVNTDVREAFCAQIGIFVQHPIVSCLFLSEDATEKSCERNFFNLIEHSLAAAKDLLVIQTLLETTAEVMVAVDVTSELFLICLFLLIDQLDHPNLIVRINASKLINRSCYIHVKGGFATLLSTASHIQNELFDNLSVRLTSRPNVVREFAEAVLGVETEELVRKMVPAVLPKLLVYWQENAQAANTLNELAKLIDTDVVPLIVNWLPRVLAFALNQEEDKNLLSVLQLYHSQIGSDNQEIFAAALPALLDELVCFVDIADTPETDRRLQRLPDAIKKISKVLTNAEDLPGFLQNHFVGLLNSIDRKMLHADDIFLQKQALKRIKLLIEMMGHYLSTYVPKLMVLLMHAIEKDALQSEGLLVLHFFTRKLADVSPSSIKYVISQIFAALIPFLEKEKEGPHVYLDEVVKILEELVLKNRDIVKEHICEFPLLPSIPSLGELNNAIQEARGLMSLKDQLRDIVNGMKHENLNVRYMVACELSKLLYNRNEDVAALIAGELVSDMEILSSLITYLLQGCAEESRTTVGQRLKLVCADCLGAIGAIDPAKVRVASCSRFKIQCSDDDLIFELIHKHLARAFRAAQDTIIQDSAALAIQELLKIAGCEPSLAGNVVVLTPQEHVQVNVSGSRRCGGNNEVKDRGQKLWDRFSNYVKELIAPCLTSRFQLPNVSDPGSAGPIYRPSMSFRRWLSYWIRKLTAFATGSRVSIFAACRGIVRHDMQTATYLLPYLVLDVVCHGTEAARLSISEEILSVLDAAASENSGVTINSFGVGQSEVCVQAVFTLLDNLGQWVDDVKQGVALSSSLQSSGGRQVAPKSKDQVSNSTTEQDHLLVQCKYVLELLLAIPKVTLARASFRCQAYARSLMYLESHVRGKSGSLNPAAEKTGIFENADVSSLMGIYSCLDEPDGLSGFASLSKSLNLQDQLLINKKSGNWADVFTACEQALQMEPTSVQRHSDVLNCLLNMCHHQTMVTHVDGLISRVPEYKKTWCTQGVQAAWRLGKWDLMDEYLDGADAEGLLFSSSDSNASFDRDVAKILHAMMKKDQYSVAEGIAISKQALIAPLAAAGMDSYTRAYPFVVKLHLLRELEDFQAVLNGDSYLEKSFSTSDQVFSKAVDNWENRLRFTQSSLWTREPLLAFRRLVFGASGLGAQVGNCWLQYAKLCRLAGHYETAHRAILEAQASGAPNVHMEKAKLLWITKRSDSAIIELQQSLLNMPEGVVDSTVISSINSLLMAPPNPEPTVRNTQSFKEKKDVAKTLLLYSKWIHHSGQKQKKDVLNLYTQVKELLPWEKGYFHLAKYYDELYVDARKCQQESSVFSSAGSKKGSVSSNLSTEKAGWDYLFKGMYFYAKALHSGHKNLFQALPRLLTLWFDFGTIYKTSGSAGNKELKSTHMKIMSLMRGCLKDLPTYQWLTVLPQLVSRICHQNADTVLMVKNIITSVLHQFPQQGLWIMAAVSKSTVPARREAAAEIIQGARKGFNQSDRGHNLFIQFASLTDHFIKLCFHGGQPRSKVINIATEFSALKRMMPLDIIMPIQQSLTISLPAFHMNNNERHSASVFSGSDLPTISGIADEAEILSSLQRPKKIILLGNDGIEYPFLCKPKDDLRKDARMMEFTAMINRLLSKYPESRRRKLYIRTFAVAPLTEDCGLVEWVPHTRGLRHILQDIYISCGKFDRQKTNPQIKRIYDQCAVKKEYEMLKTKILPMFPPVFHKWFLTTFSEPAAWFRSRVAYAHTTAVWSMVGHIVGLGDRHGENILFDSTSGDCVHVDFSCLFDKGLQLEKPELVPFRLTQNMIDGLGITGYEGIFMRVCEITLTVLRTHRETLMSILETFIHDPLVEWTKSHKSSGVEVQNPHAQRAISSIEARLQGVVVGVPLPVEGQARRLIADAVSLENLGKMYIWWMPWF</sequence>
<evidence type="ECO:0000255" key="1">
    <source>
        <dbReference type="PROSITE-ProRule" id="PRU00269"/>
    </source>
</evidence>
<evidence type="ECO:0000255" key="2">
    <source>
        <dbReference type="PROSITE-ProRule" id="PRU00534"/>
    </source>
</evidence>
<evidence type="ECO:0000255" key="3">
    <source>
        <dbReference type="PROSITE-ProRule" id="PRU00535"/>
    </source>
</evidence>
<evidence type="ECO:0000269" key="4">
    <source>
    </source>
</evidence>
<evidence type="ECO:0000269" key="5">
    <source>
    </source>
</evidence>
<evidence type="ECO:0000269" key="6">
    <source>
    </source>
</evidence>
<evidence type="ECO:0000269" key="7">
    <source>
    </source>
</evidence>
<evidence type="ECO:0000305" key="8"/>
<accession>Q9FKS4</accession>
<accession>Q9MAZ4</accession>
<dbReference type="EC" id="2.7.11.1"/>
<dbReference type="EMBL" id="AB040133">
    <property type="protein sequence ID" value="BAA92828.1"/>
    <property type="molecule type" value="mRNA"/>
</dbReference>
<dbReference type="EMBL" id="AB011477">
    <property type="protein sequence ID" value="BAB11344.1"/>
    <property type="status" value="ALT_SEQ"/>
    <property type="molecule type" value="Genomic_DNA"/>
</dbReference>
<dbReference type="EMBL" id="CP002688">
    <property type="protein sequence ID" value="AED94599.1"/>
    <property type="molecule type" value="Genomic_DNA"/>
</dbReference>
<dbReference type="EMBL" id="CP002688">
    <property type="protein sequence ID" value="ANM71086.1"/>
    <property type="molecule type" value="Genomic_DNA"/>
</dbReference>
<dbReference type="EMBL" id="CP002688">
    <property type="protein sequence ID" value="ANM71087.1"/>
    <property type="molecule type" value="Genomic_DNA"/>
</dbReference>
<dbReference type="RefSeq" id="NP_001332642.1">
    <property type="nucleotide sequence ID" value="NM_001344357.1"/>
</dbReference>
<dbReference type="RefSeq" id="NP_001332643.1">
    <property type="nucleotide sequence ID" value="NM_001344356.1"/>
</dbReference>
<dbReference type="RefSeq" id="NP_198898.2">
    <property type="nucleotide sequence ID" value="NM_123447.3"/>
</dbReference>
<dbReference type="FunCoup" id="Q9FKS4">
    <property type="interactions" value="2733"/>
</dbReference>
<dbReference type="STRING" id="3702.Q9FKS4"/>
<dbReference type="GlyGen" id="Q9FKS4">
    <property type="glycosylation" value="1 site"/>
</dbReference>
<dbReference type="iPTMnet" id="Q9FKS4"/>
<dbReference type="PaxDb" id="3702-AT5G40820.1"/>
<dbReference type="ProteomicsDB" id="241008"/>
<dbReference type="EnsemblPlants" id="AT5G40820.1">
    <property type="protein sequence ID" value="AT5G40820.1"/>
    <property type="gene ID" value="AT5G40820"/>
</dbReference>
<dbReference type="EnsemblPlants" id="AT5G40820.3">
    <property type="protein sequence ID" value="AT5G40820.3"/>
    <property type="gene ID" value="AT5G40820"/>
</dbReference>
<dbReference type="EnsemblPlants" id="AT5G40820.4">
    <property type="protein sequence ID" value="AT5G40820.4"/>
    <property type="gene ID" value="AT5G40820"/>
</dbReference>
<dbReference type="GeneID" id="834082"/>
<dbReference type="Gramene" id="AT5G40820.1">
    <property type="protein sequence ID" value="AT5G40820.1"/>
    <property type="gene ID" value="AT5G40820"/>
</dbReference>
<dbReference type="Gramene" id="AT5G40820.3">
    <property type="protein sequence ID" value="AT5G40820.3"/>
    <property type="gene ID" value="AT5G40820"/>
</dbReference>
<dbReference type="Gramene" id="AT5G40820.4">
    <property type="protein sequence ID" value="AT5G40820.4"/>
    <property type="gene ID" value="AT5G40820"/>
</dbReference>
<dbReference type="KEGG" id="ath:AT5G40820"/>
<dbReference type="Araport" id="AT5G40820"/>
<dbReference type="TAIR" id="AT5G40820">
    <property type="gene designation" value="ATR"/>
</dbReference>
<dbReference type="eggNOG" id="KOG0890">
    <property type="taxonomic scope" value="Eukaryota"/>
</dbReference>
<dbReference type="HOGENOM" id="CLU_000178_2_0_1"/>
<dbReference type="InParanoid" id="Q9FKS4"/>
<dbReference type="OMA" id="YTVYSQM"/>
<dbReference type="PhylomeDB" id="Q9FKS4"/>
<dbReference type="PRO" id="PR:Q9FKS4"/>
<dbReference type="Proteomes" id="UP000006548">
    <property type="component" value="Chromosome 5"/>
</dbReference>
<dbReference type="ExpressionAtlas" id="Q9FKS4">
    <property type="expression patterns" value="baseline and differential"/>
</dbReference>
<dbReference type="GO" id="GO:0005634">
    <property type="term" value="C:nucleus"/>
    <property type="evidence" value="ECO:0007669"/>
    <property type="project" value="UniProtKB-SubCell"/>
</dbReference>
<dbReference type="GO" id="GO:0009506">
    <property type="term" value="C:plasmodesma"/>
    <property type="evidence" value="ECO:0007005"/>
    <property type="project" value="TAIR"/>
</dbReference>
<dbReference type="GO" id="GO:0005524">
    <property type="term" value="F:ATP binding"/>
    <property type="evidence" value="ECO:0007669"/>
    <property type="project" value="UniProtKB-KW"/>
</dbReference>
<dbReference type="GO" id="GO:0106310">
    <property type="term" value="F:protein serine kinase activity"/>
    <property type="evidence" value="ECO:0007669"/>
    <property type="project" value="RHEA"/>
</dbReference>
<dbReference type="GO" id="GO:0004674">
    <property type="term" value="F:protein serine/threonine kinase activity"/>
    <property type="evidence" value="ECO:0007669"/>
    <property type="project" value="UniProtKB-KW"/>
</dbReference>
<dbReference type="GO" id="GO:0006952">
    <property type="term" value="P:defense response"/>
    <property type="evidence" value="ECO:0007669"/>
    <property type="project" value="UniProtKB-KW"/>
</dbReference>
<dbReference type="GO" id="GO:0006281">
    <property type="term" value="P:DNA repair"/>
    <property type="evidence" value="ECO:0000316"/>
    <property type="project" value="TAIR"/>
</dbReference>
<dbReference type="GO" id="GO:0006303">
    <property type="term" value="P:double-strand break repair via nonhomologous end joining"/>
    <property type="evidence" value="ECO:0000315"/>
    <property type="project" value="TAIR"/>
</dbReference>
<dbReference type="GO" id="GO:0051321">
    <property type="term" value="P:meiotic cell cycle"/>
    <property type="evidence" value="ECO:0000316"/>
    <property type="project" value="TAIR"/>
</dbReference>
<dbReference type="GO" id="GO:0033044">
    <property type="term" value="P:regulation of chromosome organization"/>
    <property type="evidence" value="ECO:0000316"/>
    <property type="project" value="TAIR"/>
</dbReference>
<dbReference type="GO" id="GO:0031347">
    <property type="term" value="P:regulation of defense response"/>
    <property type="evidence" value="ECO:0000315"/>
    <property type="project" value="UniProtKB"/>
</dbReference>
<dbReference type="GO" id="GO:0006282">
    <property type="term" value="P:regulation of DNA repair"/>
    <property type="evidence" value="ECO:0000315"/>
    <property type="project" value="UniProtKB"/>
</dbReference>
<dbReference type="GO" id="GO:0032204">
    <property type="term" value="P:regulation of telomere maintenance"/>
    <property type="evidence" value="ECO:0000316"/>
    <property type="project" value="TAIR"/>
</dbReference>
<dbReference type="GO" id="GO:0010044">
    <property type="term" value="P:response to aluminum ion"/>
    <property type="evidence" value="ECO:0000315"/>
    <property type="project" value="TAIR"/>
</dbReference>
<dbReference type="GO" id="GO:0010332">
    <property type="term" value="P:response to gamma radiation"/>
    <property type="evidence" value="ECO:0000315"/>
    <property type="project" value="TAIR"/>
</dbReference>
<dbReference type="GO" id="GO:0043247">
    <property type="term" value="P:telomere maintenance in response to DNA damage"/>
    <property type="evidence" value="ECO:0000304"/>
    <property type="project" value="TAIR"/>
</dbReference>
<dbReference type="GO" id="GO:0007004">
    <property type="term" value="P:telomere maintenance via telomerase"/>
    <property type="evidence" value="ECO:0000315"/>
    <property type="project" value="TAIR"/>
</dbReference>
<dbReference type="CDD" id="cd00892">
    <property type="entry name" value="PIKKc_ATR"/>
    <property type="match status" value="1"/>
</dbReference>
<dbReference type="FunFam" id="1.10.1070.11:FF:000024">
    <property type="entry name" value="Serine/threonine-protein kinase ATR"/>
    <property type="match status" value="1"/>
</dbReference>
<dbReference type="FunFam" id="3.30.1010.10:FF:000036">
    <property type="entry name" value="Serine/threonine-protein kinase ATR"/>
    <property type="match status" value="1"/>
</dbReference>
<dbReference type="Gene3D" id="1.10.1070.11">
    <property type="entry name" value="Phosphatidylinositol 3-/4-kinase, catalytic domain"/>
    <property type="match status" value="1"/>
</dbReference>
<dbReference type="Gene3D" id="3.30.1010.10">
    <property type="entry name" value="Phosphatidylinositol 3-kinase Catalytic Subunit, Chain A, domain 4"/>
    <property type="match status" value="1"/>
</dbReference>
<dbReference type="InterPro" id="IPR016024">
    <property type="entry name" value="ARM-type_fold"/>
</dbReference>
<dbReference type="InterPro" id="IPR056802">
    <property type="entry name" value="ATR-like_M-HEAT"/>
</dbReference>
<dbReference type="InterPro" id="IPR050517">
    <property type="entry name" value="DDR_Repair_Kinase"/>
</dbReference>
<dbReference type="InterPro" id="IPR003152">
    <property type="entry name" value="FATC_dom"/>
</dbReference>
<dbReference type="InterPro" id="IPR011009">
    <property type="entry name" value="Kinase-like_dom_sf"/>
</dbReference>
<dbReference type="InterPro" id="IPR000403">
    <property type="entry name" value="PI3/4_kinase_cat_dom"/>
</dbReference>
<dbReference type="InterPro" id="IPR036940">
    <property type="entry name" value="PI3/4_kinase_cat_sf"/>
</dbReference>
<dbReference type="InterPro" id="IPR018936">
    <property type="entry name" value="PI3/4_kinase_CS"/>
</dbReference>
<dbReference type="InterPro" id="IPR003151">
    <property type="entry name" value="PIK-rel_kinase_FAT"/>
</dbReference>
<dbReference type="InterPro" id="IPR014009">
    <property type="entry name" value="PIK_FAT"/>
</dbReference>
<dbReference type="InterPro" id="IPR012993">
    <property type="entry name" value="UME"/>
</dbReference>
<dbReference type="PANTHER" id="PTHR11139">
    <property type="entry name" value="ATAXIA TELANGIECTASIA MUTATED ATM -RELATED"/>
    <property type="match status" value="1"/>
</dbReference>
<dbReference type="PANTHER" id="PTHR11139:SF69">
    <property type="entry name" value="SERINE_THREONINE-PROTEIN KINASE ATR"/>
    <property type="match status" value="1"/>
</dbReference>
<dbReference type="Pfam" id="PF02259">
    <property type="entry name" value="FAT"/>
    <property type="match status" value="1"/>
</dbReference>
<dbReference type="Pfam" id="PF02260">
    <property type="entry name" value="FATC"/>
    <property type="match status" value="1"/>
</dbReference>
<dbReference type="Pfam" id="PF23593">
    <property type="entry name" value="HEAT_ATR"/>
    <property type="match status" value="1"/>
</dbReference>
<dbReference type="Pfam" id="PF25030">
    <property type="entry name" value="M-HEAT_ATR"/>
    <property type="match status" value="1"/>
</dbReference>
<dbReference type="Pfam" id="PF00454">
    <property type="entry name" value="PI3_PI4_kinase"/>
    <property type="match status" value="1"/>
</dbReference>
<dbReference type="Pfam" id="PF08064">
    <property type="entry name" value="UME"/>
    <property type="match status" value="1"/>
</dbReference>
<dbReference type="SMART" id="SM01343">
    <property type="entry name" value="FATC"/>
    <property type="match status" value="1"/>
</dbReference>
<dbReference type="SMART" id="SM00146">
    <property type="entry name" value="PI3Kc"/>
    <property type="match status" value="1"/>
</dbReference>
<dbReference type="SMART" id="SM00802">
    <property type="entry name" value="UME"/>
    <property type="match status" value="1"/>
</dbReference>
<dbReference type="SUPFAM" id="SSF48371">
    <property type="entry name" value="ARM repeat"/>
    <property type="match status" value="1"/>
</dbReference>
<dbReference type="SUPFAM" id="SSF56112">
    <property type="entry name" value="Protein kinase-like (PK-like)"/>
    <property type="match status" value="1"/>
</dbReference>
<dbReference type="PROSITE" id="PS51189">
    <property type="entry name" value="FAT"/>
    <property type="match status" value="1"/>
</dbReference>
<dbReference type="PROSITE" id="PS51190">
    <property type="entry name" value="FATC"/>
    <property type="match status" value="1"/>
</dbReference>
<dbReference type="PROSITE" id="PS00916">
    <property type="entry name" value="PI3_4_KINASE_2"/>
    <property type="match status" value="1"/>
</dbReference>
<dbReference type="PROSITE" id="PS50290">
    <property type="entry name" value="PI3_4_KINASE_3"/>
    <property type="match status" value="1"/>
</dbReference>
<proteinExistence type="evidence at transcript level"/>
<comment type="function">
    <text evidence="4 5 6 7">Probable serine/threonine kinase. Plays a central role in cell-cycle regulation by transmitting DNA damage signals to downstream effectors of cell-cycle progression. May recognize the substrate consensus sequence [ST]-Q and phosphorylate histone variant H2AX to form H2AXS139ph at sites of DNA damage, thereby regulating DNA damage response mechanism. Seems to be required for the G2-phase checkpoint in response to replication blocks but not absolutely required in the G2-arrest response to double-strand breaks. May also be involved in the meiosis process. Required for the basal expression of RNR1 (ribonucleotide reductase large subunit). Acts in concert with telomerase to maintain telomeric DNA tracts. Not required for telomere length homeostasis. Required for effective immune responses that involve activation of DNA damage responses (PubMed:24207055).</text>
</comment>
<comment type="catalytic activity">
    <reaction>
        <text>L-seryl-[protein] + ATP = O-phospho-L-seryl-[protein] + ADP + H(+)</text>
        <dbReference type="Rhea" id="RHEA:17989"/>
        <dbReference type="Rhea" id="RHEA-COMP:9863"/>
        <dbReference type="Rhea" id="RHEA-COMP:11604"/>
        <dbReference type="ChEBI" id="CHEBI:15378"/>
        <dbReference type="ChEBI" id="CHEBI:29999"/>
        <dbReference type="ChEBI" id="CHEBI:30616"/>
        <dbReference type="ChEBI" id="CHEBI:83421"/>
        <dbReference type="ChEBI" id="CHEBI:456216"/>
        <dbReference type="EC" id="2.7.11.1"/>
    </reaction>
</comment>
<comment type="catalytic activity">
    <reaction>
        <text>L-threonyl-[protein] + ATP = O-phospho-L-threonyl-[protein] + ADP + H(+)</text>
        <dbReference type="Rhea" id="RHEA:46608"/>
        <dbReference type="Rhea" id="RHEA-COMP:11060"/>
        <dbReference type="Rhea" id="RHEA-COMP:11605"/>
        <dbReference type="ChEBI" id="CHEBI:15378"/>
        <dbReference type="ChEBI" id="CHEBI:30013"/>
        <dbReference type="ChEBI" id="CHEBI:30616"/>
        <dbReference type="ChEBI" id="CHEBI:61977"/>
        <dbReference type="ChEBI" id="CHEBI:456216"/>
        <dbReference type="EC" id="2.7.11.1"/>
    </reaction>
</comment>
<comment type="subcellular location">
    <subcellularLocation>
        <location evidence="8">Nucleus</location>
    </subcellularLocation>
</comment>
<comment type="induction">
    <text evidence="4 7">Strongly induced by replication blocking agents (UVB, aphidicolin and hydroxyurea) but only mildly induced by DNA damaging agents (gamma-radiation) (PubMed:15075397). Negatively regulated by the key immune regulator SNI1 (PubMed:24207055).</text>
</comment>
<comment type="disruption phenotype">
    <text evidence="7">Suppressor of sni1 mutation symptoms including the accumulation of DNA damage leading to a constitutively activated DNA damage responses (DDR) and increased basal expression of pathogenesis-related (PR) genes.</text>
</comment>
<comment type="miscellaneous">
    <text>Loss-of-function mutations (T-DNA insertion) are hypersensitive to replication antagonists, including UV light, aphidicolin, and hydroxyurea, and are defective in G2 checkpoints induced by these agents.</text>
</comment>
<comment type="similarity">
    <text evidence="8">Belongs to the PI3/PI4-kinase family. ATM subfamily.</text>
</comment>
<comment type="sequence caution" evidence="8">
    <conflict type="erroneous gene model prediction">
        <sequence resource="EMBL-CDS" id="BAB11344"/>
    </conflict>
</comment>
<organism>
    <name type="scientific">Arabidopsis thaliana</name>
    <name type="common">Mouse-ear cress</name>
    <dbReference type="NCBI Taxonomy" id="3702"/>
    <lineage>
        <taxon>Eukaryota</taxon>
        <taxon>Viridiplantae</taxon>
        <taxon>Streptophyta</taxon>
        <taxon>Embryophyta</taxon>
        <taxon>Tracheophyta</taxon>
        <taxon>Spermatophyta</taxon>
        <taxon>Magnoliopsida</taxon>
        <taxon>eudicotyledons</taxon>
        <taxon>Gunneridae</taxon>
        <taxon>Pentapetalae</taxon>
        <taxon>rosids</taxon>
        <taxon>malvids</taxon>
        <taxon>Brassicales</taxon>
        <taxon>Brassicaceae</taxon>
        <taxon>Camelineae</taxon>
        <taxon>Arabidopsis</taxon>
    </lineage>
</organism>
<gene>
    <name type="primary">ATR</name>
    <name type="synonym">RAD3</name>
    <name type="ordered locus">At5g40820</name>
    <name type="ORF">MHK7.5</name>
</gene>
<keyword id="KW-0067">ATP-binding</keyword>
<keyword id="KW-0131">Cell cycle</keyword>
<keyword id="KW-0227">DNA damage</keyword>
<keyword id="KW-0234">DNA repair</keyword>
<keyword id="KW-0418">Kinase</keyword>
<keyword id="KW-0547">Nucleotide-binding</keyword>
<keyword id="KW-0539">Nucleus</keyword>
<keyword id="KW-0611">Plant defense</keyword>
<keyword id="KW-1185">Reference proteome</keyword>
<keyword id="KW-0723">Serine/threonine-protein kinase</keyword>
<keyword id="KW-0808">Transferase</keyword>
<name>ATR_ARATH</name>
<protein>
    <recommendedName>
        <fullName>Serine/threonine-protein kinase ATR</fullName>
        <shortName>AtATR</shortName>
        <ecNumber>2.7.11.1</ecNumber>
    </recommendedName>
    <alternativeName>
        <fullName>Ataxia telangiectasia-mutated and Rad3-related homolog</fullName>
    </alternativeName>
    <alternativeName>
        <fullName>DNA repair protein ATR</fullName>
    </alternativeName>
    <alternativeName>
        <fullName>Rad3-like protein</fullName>
        <shortName>AtRAD3</shortName>
    </alternativeName>
</protein>
<reference key="1">
    <citation type="submission" date="2000-03" db="EMBL/GenBank/DDBJ databases">
        <title>Arabidopsis thaliana mRNA for AtRAD3, complete cds.</title>
        <authorList>
            <person name="Sugiyama H."/>
            <person name="Oguchi K."/>
            <person name="Tamura K."/>
            <person name="Takahashi H."/>
        </authorList>
    </citation>
    <scope>NUCLEOTIDE SEQUENCE [MRNA]</scope>
    <source>
        <strain>cv. Columbia</strain>
    </source>
</reference>
<reference key="2">
    <citation type="journal article" date="1998" name="DNA Res.">
        <title>Structural analysis of Arabidopsis thaliana chromosome 5. V. Sequence features of the regions of 1,381,565 bp covered by twenty one physically assigned P1 and TAC clones.</title>
        <authorList>
            <person name="Kaneko T."/>
            <person name="Kotani H."/>
            <person name="Nakamura Y."/>
            <person name="Sato S."/>
            <person name="Asamizu E."/>
            <person name="Miyajima N."/>
            <person name="Tabata S."/>
        </authorList>
    </citation>
    <scope>NUCLEOTIDE SEQUENCE [LARGE SCALE GENOMIC DNA]</scope>
    <source>
        <strain>cv. Columbia</strain>
    </source>
</reference>
<reference key="3">
    <citation type="journal article" date="2017" name="Plant J.">
        <title>Araport11: a complete reannotation of the Arabidopsis thaliana reference genome.</title>
        <authorList>
            <person name="Cheng C.Y."/>
            <person name="Krishnakumar V."/>
            <person name="Chan A.P."/>
            <person name="Thibaud-Nissen F."/>
            <person name="Schobel S."/>
            <person name="Town C.D."/>
        </authorList>
    </citation>
    <scope>GENOME REANNOTATION</scope>
    <source>
        <strain>cv. Columbia</strain>
    </source>
</reference>
<reference key="4">
    <citation type="journal article" date="2004" name="Plant Cell">
        <title>ATR regulates a G2-phase cell-cycle checkpoint in Arabidopsis thaliana.</title>
        <authorList>
            <person name="Culligan K."/>
            <person name="Tissier A."/>
            <person name="Britt A."/>
        </authorList>
    </citation>
    <scope>FUNCTION</scope>
    <scope>INDUCTION</scope>
</reference>
<reference key="5">
    <citation type="journal article" date="2005" name="Genes Dev.">
        <title>ATM and ATR make distinct contributions to chromosome end protection and the maintenance of telomeric DNA in Arabidopsis.</title>
        <authorList>
            <person name="Vespa L."/>
            <person name="Couvillion M."/>
            <person name="Spangler E."/>
            <person name="Shippen D.E."/>
        </authorList>
    </citation>
    <scope>FUNCTION</scope>
</reference>
<reference key="6">
    <citation type="journal article" date="2005" name="Mol. Biol. Cell">
        <title>Ionizing radiation-dependent gamma-H2AX focus formation requires ataxia telangiectasia mutated and ataxia telangiectasia mutated and Rad3-related.</title>
        <authorList>
            <person name="Friesner J.D."/>
            <person name="Liu B."/>
            <person name="Culligan K."/>
            <person name="Britt A.B."/>
        </authorList>
    </citation>
    <scope>FUNCTION</scope>
</reference>
<reference key="7">
    <citation type="journal article" date="2013" name="Mol. Cell">
        <title>Salicylic acid activates DNA damage responses to potentiate plant immunity.</title>
        <authorList>
            <person name="Yan S."/>
            <person name="Wang W."/>
            <person name="Marques J."/>
            <person name="Mohan R."/>
            <person name="Saleh A."/>
            <person name="Durrant W.E."/>
            <person name="Song J."/>
            <person name="Dong X."/>
        </authorList>
    </citation>
    <scope>FUNCTION</scope>
    <scope>DISRUPTION PHENOTYPE</scope>
    <scope>INDUCTION BY SNI1</scope>
</reference>
<feature type="chain" id="PRO_0000088838" description="Serine/threonine-protein kinase ATR">
    <location>
        <begin position="1"/>
        <end position="2702"/>
    </location>
</feature>
<feature type="domain" description="FAT" evidence="2">
    <location>
        <begin position="1646"/>
        <end position="2255"/>
    </location>
</feature>
<feature type="domain" description="PI3K/PI4K catalytic" evidence="1">
    <location>
        <begin position="2366"/>
        <end position="2678"/>
    </location>
</feature>
<feature type="domain" description="FATC" evidence="2 3">
    <location>
        <begin position="2670"/>
        <end position="2702"/>
    </location>
</feature>
<feature type="region of interest" description="G-loop" evidence="1">
    <location>
        <begin position="2372"/>
        <end position="2378"/>
    </location>
</feature>
<feature type="region of interest" description="Catalytic loop" evidence="1">
    <location>
        <begin position="2543"/>
        <end position="2551"/>
    </location>
</feature>
<feature type="region of interest" description="Activation loop" evidence="1">
    <location>
        <begin position="2563"/>
        <end position="2587"/>
    </location>
</feature>
<feature type="sequence conflict" description="In Ref. 1; BAA92828." evidence="8" ref="1">
    <original>AS</original>
    <variation>GIH</variation>
    <location>
        <begin position="152"/>
        <end position="153"/>
    </location>
</feature>